<evidence type="ECO:0000255" key="1"/>
<evidence type="ECO:0000269" key="2">
    <source>
    </source>
</evidence>
<evidence type="ECO:0000303" key="3">
    <source>
    </source>
</evidence>
<evidence type="ECO:0000305" key="4"/>
<evidence type="ECO:0000305" key="5">
    <source>
    </source>
</evidence>
<feature type="peptide" id="PRO_0000420139" description="Brevinin-1JDc" evidence="2">
    <location>
        <begin position="1"/>
        <end position="24"/>
    </location>
</feature>
<feature type="disulfide bond" evidence="2">
    <location>
        <begin position="18"/>
        <end position="24"/>
    </location>
</feature>
<name>BR1C_ODOJI</name>
<protein>
    <recommendedName>
        <fullName evidence="3">Brevinin-1JDc</fullName>
    </recommendedName>
</protein>
<proteinExistence type="evidence at protein level"/>
<comment type="function">
    <text evidence="2">Has antibacterial activity against E.coli ATCC 25992 (MIC=49 uM), E.coli CIB 84492 (MIC=25 uM), S.aureus ATCC 25923 (MIC=6 uM) and S.aureus CIB 85462 (MIC=3 uM).</text>
</comment>
<comment type="subcellular location">
    <subcellularLocation>
        <location evidence="5">Secreted</location>
    </subcellularLocation>
</comment>
<comment type="tissue specificity">
    <text evidence="5">Expressed by the skin glands.</text>
</comment>
<comment type="mass spectrometry" mass="2600.5215" error="0.0012" method="Electrospray" evidence="2"/>
<comment type="similarity">
    <text evidence="1">Belongs to the frog skin active peptide (FSAP) family. Brevinin subfamily.</text>
</comment>
<sequence length="24" mass="2603">FLPAVLRVAAKVVPTVFCLISKKC</sequence>
<reference evidence="4" key="1">
    <citation type="journal article" date="2012" name="J. Proteomics">
        <title>Antimicrobial peptides from the skin of the Asian frog, Odorrana jingdongensis: De novo sequencing and analysis of tandem mass spectrometry data.</title>
        <authorList>
            <person name="Liu J."/>
            <person name="Jiang J."/>
            <person name="Wu Z."/>
            <person name="Xie F."/>
        </authorList>
    </citation>
    <scope>PROTEIN SEQUENCE</scope>
    <scope>FUNCTION</scope>
    <scope>SUBCELLULAR LOCATION</scope>
    <scope>MASS SPECTROMETRY</scope>
    <source>
        <tissue evidence="2">Skin secretion</tissue>
    </source>
</reference>
<accession>B3A0N0</accession>
<organism>
    <name type="scientific">Odorrana jingdongensis</name>
    <name type="common">Jingdong frog</name>
    <name type="synonym">Rana jingdongensis</name>
    <dbReference type="NCBI Taxonomy" id="431936"/>
    <lineage>
        <taxon>Eukaryota</taxon>
        <taxon>Metazoa</taxon>
        <taxon>Chordata</taxon>
        <taxon>Craniata</taxon>
        <taxon>Vertebrata</taxon>
        <taxon>Euteleostomi</taxon>
        <taxon>Amphibia</taxon>
        <taxon>Batrachia</taxon>
        <taxon>Anura</taxon>
        <taxon>Neobatrachia</taxon>
        <taxon>Ranoidea</taxon>
        <taxon>Ranidae</taxon>
        <taxon>Odorrana</taxon>
    </lineage>
</organism>
<dbReference type="GO" id="GO:0005576">
    <property type="term" value="C:extracellular region"/>
    <property type="evidence" value="ECO:0007669"/>
    <property type="project" value="UniProtKB-SubCell"/>
</dbReference>
<dbReference type="GO" id="GO:0050832">
    <property type="term" value="P:defense response to fungus"/>
    <property type="evidence" value="ECO:0000314"/>
    <property type="project" value="UniProtKB"/>
</dbReference>
<dbReference type="GO" id="GO:0050829">
    <property type="term" value="P:defense response to Gram-negative bacterium"/>
    <property type="evidence" value="ECO:0000314"/>
    <property type="project" value="UniProtKB"/>
</dbReference>
<dbReference type="GO" id="GO:0031640">
    <property type="term" value="P:killing of cells of another organism"/>
    <property type="evidence" value="ECO:0007669"/>
    <property type="project" value="UniProtKB-KW"/>
</dbReference>
<dbReference type="InterPro" id="IPR012520">
    <property type="entry name" value="Antimicrobial_frog_1"/>
</dbReference>
<dbReference type="Pfam" id="PF08018">
    <property type="entry name" value="Antimicrobial_1"/>
    <property type="match status" value="1"/>
</dbReference>
<keyword id="KW-0878">Amphibian defense peptide</keyword>
<keyword id="KW-0044">Antibiotic</keyword>
<keyword id="KW-0929">Antimicrobial</keyword>
<keyword id="KW-0903">Direct protein sequencing</keyword>
<keyword id="KW-1015">Disulfide bond</keyword>
<keyword id="KW-0295">Fungicide</keyword>
<keyword id="KW-0964">Secreted</keyword>